<reference key="1">
    <citation type="journal article" date="2007" name="J. Bacteriol.">
        <title>The complete genome sequence of Bacillus thuringiensis Al Hakam.</title>
        <authorList>
            <person name="Challacombe J.F."/>
            <person name="Altherr M.R."/>
            <person name="Xie G."/>
            <person name="Bhotika S.S."/>
            <person name="Brown N."/>
            <person name="Bruce D."/>
            <person name="Campbell C.S."/>
            <person name="Campbell M.L."/>
            <person name="Chen J."/>
            <person name="Chertkov O."/>
            <person name="Cleland C."/>
            <person name="Dimitrijevic M."/>
            <person name="Doggett N.A."/>
            <person name="Fawcett J.J."/>
            <person name="Glavina T."/>
            <person name="Goodwin L.A."/>
            <person name="Green L.D."/>
            <person name="Han C.S."/>
            <person name="Hill K.K."/>
            <person name="Hitchcock P."/>
            <person name="Jackson P.J."/>
            <person name="Keim P."/>
            <person name="Kewalramani A.R."/>
            <person name="Longmire J."/>
            <person name="Lucas S."/>
            <person name="Malfatti S."/>
            <person name="Martinez D."/>
            <person name="McMurry K."/>
            <person name="Meincke L.J."/>
            <person name="Misra M."/>
            <person name="Moseman B.L."/>
            <person name="Mundt M."/>
            <person name="Munk A.C."/>
            <person name="Okinaka R.T."/>
            <person name="Parson-Quintana B."/>
            <person name="Reilly L.P."/>
            <person name="Richardson P."/>
            <person name="Robinson D.L."/>
            <person name="Saunders E."/>
            <person name="Tapia R."/>
            <person name="Tesmer J.G."/>
            <person name="Thayer N."/>
            <person name="Thompson L.S."/>
            <person name="Tice H."/>
            <person name="Ticknor L.O."/>
            <person name="Wills P.L."/>
            <person name="Gilna P."/>
            <person name="Brettin T.S."/>
        </authorList>
    </citation>
    <scope>NUCLEOTIDE SEQUENCE [LARGE SCALE GENOMIC DNA]</scope>
    <source>
        <strain>Al Hakam</strain>
    </source>
</reference>
<protein>
    <recommendedName>
        <fullName evidence="1">Small ribosomal subunit protein uS11</fullName>
    </recommendedName>
    <alternativeName>
        <fullName evidence="2">30S ribosomal protein S11</fullName>
    </alternativeName>
</protein>
<keyword id="KW-0687">Ribonucleoprotein</keyword>
<keyword id="KW-0689">Ribosomal protein</keyword>
<keyword id="KW-0694">RNA-binding</keyword>
<keyword id="KW-0699">rRNA-binding</keyword>
<evidence type="ECO:0000255" key="1">
    <source>
        <dbReference type="HAMAP-Rule" id="MF_01310"/>
    </source>
</evidence>
<evidence type="ECO:0000305" key="2"/>
<organism>
    <name type="scientific">Bacillus thuringiensis (strain Al Hakam)</name>
    <dbReference type="NCBI Taxonomy" id="412694"/>
    <lineage>
        <taxon>Bacteria</taxon>
        <taxon>Bacillati</taxon>
        <taxon>Bacillota</taxon>
        <taxon>Bacilli</taxon>
        <taxon>Bacillales</taxon>
        <taxon>Bacillaceae</taxon>
        <taxon>Bacillus</taxon>
        <taxon>Bacillus cereus group</taxon>
    </lineage>
</organism>
<comment type="function">
    <text evidence="1">Located on the platform of the 30S subunit, it bridges several disparate RNA helices of the 16S rRNA. Forms part of the Shine-Dalgarno cleft in the 70S ribosome.</text>
</comment>
<comment type="subunit">
    <text evidence="1">Part of the 30S ribosomal subunit. Interacts with proteins S7 and S18. Binds to IF-3.</text>
</comment>
<comment type="similarity">
    <text evidence="1">Belongs to the universal ribosomal protein uS11 family.</text>
</comment>
<sequence>MARKTNTRKKRVKKNIEAGVAHIRSTFNNTIVTLTDTHGNALSWSSAGALGFRGSRKSTPFAAQMAAETAAKAAMEHGLKTLEVTVKGPGAGREAAIRALQAAGLEVTAIRDVTPVPHNGCRPPKRRRV</sequence>
<dbReference type="EMBL" id="CP000485">
    <property type="protein sequence ID" value="ABK83548.1"/>
    <property type="molecule type" value="Genomic_DNA"/>
</dbReference>
<dbReference type="RefSeq" id="WP_000101799.1">
    <property type="nucleotide sequence ID" value="NC_008600.1"/>
</dbReference>
<dbReference type="SMR" id="A0R8K5"/>
<dbReference type="GeneID" id="93010917"/>
<dbReference type="KEGG" id="btl:BALH_0133"/>
<dbReference type="HOGENOM" id="CLU_072439_5_0_9"/>
<dbReference type="GO" id="GO:1990904">
    <property type="term" value="C:ribonucleoprotein complex"/>
    <property type="evidence" value="ECO:0007669"/>
    <property type="project" value="UniProtKB-KW"/>
</dbReference>
<dbReference type="GO" id="GO:0005840">
    <property type="term" value="C:ribosome"/>
    <property type="evidence" value="ECO:0007669"/>
    <property type="project" value="UniProtKB-KW"/>
</dbReference>
<dbReference type="GO" id="GO:0019843">
    <property type="term" value="F:rRNA binding"/>
    <property type="evidence" value="ECO:0007669"/>
    <property type="project" value="UniProtKB-UniRule"/>
</dbReference>
<dbReference type="GO" id="GO:0003735">
    <property type="term" value="F:structural constituent of ribosome"/>
    <property type="evidence" value="ECO:0007669"/>
    <property type="project" value="InterPro"/>
</dbReference>
<dbReference type="GO" id="GO:0006412">
    <property type="term" value="P:translation"/>
    <property type="evidence" value="ECO:0007669"/>
    <property type="project" value="UniProtKB-UniRule"/>
</dbReference>
<dbReference type="FunFam" id="3.30.420.80:FF:000001">
    <property type="entry name" value="30S ribosomal protein S11"/>
    <property type="match status" value="1"/>
</dbReference>
<dbReference type="Gene3D" id="3.30.420.80">
    <property type="entry name" value="Ribosomal protein S11"/>
    <property type="match status" value="1"/>
</dbReference>
<dbReference type="HAMAP" id="MF_01310">
    <property type="entry name" value="Ribosomal_uS11"/>
    <property type="match status" value="1"/>
</dbReference>
<dbReference type="InterPro" id="IPR001971">
    <property type="entry name" value="Ribosomal_uS11"/>
</dbReference>
<dbReference type="InterPro" id="IPR019981">
    <property type="entry name" value="Ribosomal_uS11_bac-type"/>
</dbReference>
<dbReference type="InterPro" id="IPR018102">
    <property type="entry name" value="Ribosomal_uS11_CS"/>
</dbReference>
<dbReference type="InterPro" id="IPR036967">
    <property type="entry name" value="Ribosomal_uS11_sf"/>
</dbReference>
<dbReference type="NCBIfam" id="NF003698">
    <property type="entry name" value="PRK05309.1"/>
    <property type="match status" value="1"/>
</dbReference>
<dbReference type="NCBIfam" id="TIGR03632">
    <property type="entry name" value="uS11_bact"/>
    <property type="match status" value="1"/>
</dbReference>
<dbReference type="PANTHER" id="PTHR11759">
    <property type="entry name" value="40S RIBOSOMAL PROTEIN S14/30S RIBOSOMAL PROTEIN S11"/>
    <property type="match status" value="1"/>
</dbReference>
<dbReference type="Pfam" id="PF00411">
    <property type="entry name" value="Ribosomal_S11"/>
    <property type="match status" value="1"/>
</dbReference>
<dbReference type="PIRSF" id="PIRSF002131">
    <property type="entry name" value="Ribosomal_S11"/>
    <property type="match status" value="1"/>
</dbReference>
<dbReference type="SUPFAM" id="SSF53137">
    <property type="entry name" value="Translational machinery components"/>
    <property type="match status" value="1"/>
</dbReference>
<dbReference type="PROSITE" id="PS00054">
    <property type="entry name" value="RIBOSOMAL_S11"/>
    <property type="match status" value="1"/>
</dbReference>
<proteinExistence type="inferred from homology"/>
<accession>A0R8K5</accession>
<name>RS11_BACAH</name>
<gene>
    <name evidence="1" type="primary">rpsK</name>
    <name type="ordered locus">BALH_0133</name>
</gene>
<feature type="chain" id="PRO_0000294718" description="Small ribosomal subunit protein uS11">
    <location>
        <begin position="1"/>
        <end position="129"/>
    </location>
</feature>